<dbReference type="EMBL" id="AE006470">
    <property type="protein sequence ID" value="AAM72081.1"/>
    <property type="molecule type" value="Genomic_DNA"/>
</dbReference>
<dbReference type="RefSeq" id="NP_661739.1">
    <property type="nucleotide sequence ID" value="NC_002932.3"/>
</dbReference>
<dbReference type="STRING" id="194439.CT0845"/>
<dbReference type="EnsemblBacteria" id="AAM72081">
    <property type="protein sequence ID" value="AAM72081"/>
    <property type="gene ID" value="CT0845"/>
</dbReference>
<dbReference type="KEGG" id="cte:CT0845"/>
<dbReference type="PATRIC" id="fig|194439.7.peg.768"/>
<dbReference type="eggNOG" id="COG2855">
    <property type="taxonomic scope" value="Bacteria"/>
</dbReference>
<dbReference type="HOGENOM" id="CLU_033541_0_1_10"/>
<dbReference type="OrthoDB" id="9811391at2"/>
<dbReference type="Proteomes" id="UP000001007">
    <property type="component" value="Chromosome"/>
</dbReference>
<dbReference type="GO" id="GO:0005886">
    <property type="term" value="C:plasma membrane"/>
    <property type="evidence" value="ECO:0007669"/>
    <property type="project" value="UniProtKB-SubCell"/>
</dbReference>
<dbReference type="InterPro" id="IPR018383">
    <property type="entry name" value="UPF0324_pro"/>
</dbReference>
<dbReference type="PANTHER" id="PTHR30106">
    <property type="entry name" value="INNER MEMBRANE PROTEIN YEIH-RELATED"/>
    <property type="match status" value="1"/>
</dbReference>
<dbReference type="PANTHER" id="PTHR30106:SF2">
    <property type="entry name" value="UPF0324 INNER MEMBRANE PROTEIN YEIH"/>
    <property type="match status" value="1"/>
</dbReference>
<dbReference type="Pfam" id="PF03601">
    <property type="entry name" value="Cons_hypoth698"/>
    <property type="match status" value="1"/>
</dbReference>
<feature type="chain" id="PRO_0000157405" description="UPF0324 membrane protein CT0845">
    <location>
        <begin position="1"/>
        <end position="358"/>
    </location>
</feature>
<feature type="transmembrane region" description="Helical" evidence="1">
    <location>
        <begin position="36"/>
        <end position="53"/>
    </location>
</feature>
<feature type="transmembrane region" description="Helical" evidence="1">
    <location>
        <begin position="57"/>
        <end position="76"/>
    </location>
</feature>
<feature type="transmembrane region" description="Helical" evidence="1">
    <location>
        <begin position="83"/>
        <end position="105"/>
    </location>
</feature>
<feature type="transmembrane region" description="Helical" evidence="1">
    <location>
        <begin position="115"/>
        <end position="134"/>
    </location>
</feature>
<feature type="transmembrane region" description="Helical" evidence="1">
    <location>
        <begin position="146"/>
        <end position="168"/>
    </location>
</feature>
<feature type="transmembrane region" description="Helical" evidence="1">
    <location>
        <begin position="178"/>
        <end position="200"/>
    </location>
</feature>
<feature type="transmembrane region" description="Helical" evidence="1">
    <location>
        <begin position="244"/>
        <end position="261"/>
    </location>
</feature>
<feature type="transmembrane region" description="Helical" evidence="1">
    <location>
        <begin position="276"/>
        <end position="295"/>
    </location>
</feature>
<feature type="transmembrane region" description="Helical" evidence="1">
    <location>
        <begin position="307"/>
        <end position="325"/>
    </location>
</feature>
<feature type="transmembrane region" description="Helical" evidence="1">
    <location>
        <begin position="335"/>
        <end position="357"/>
    </location>
</feature>
<accession>Q8KE45</accession>
<keyword id="KW-1003">Cell membrane</keyword>
<keyword id="KW-0472">Membrane</keyword>
<keyword id="KW-1185">Reference proteome</keyword>
<keyword id="KW-0812">Transmembrane</keyword>
<keyword id="KW-1133">Transmembrane helix</keyword>
<name>Y845_CHLTE</name>
<organism>
    <name type="scientific">Chlorobaculum tepidum (strain ATCC 49652 / DSM 12025 / NBRC 103806 / TLS)</name>
    <name type="common">Chlorobium tepidum</name>
    <dbReference type="NCBI Taxonomy" id="194439"/>
    <lineage>
        <taxon>Bacteria</taxon>
        <taxon>Pseudomonadati</taxon>
        <taxon>Chlorobiota</taxon>
        <taxon>Chlorobiia</taxon>
        <taxon>Chlorobiales</taxon>
        <taxon>Chlorobiaceae</taxon>
        <taxon>Chlorobaculum</taxon>
    </lineage>
</organism>
<comment type="subcellular location">
    <subcellularLocation>
        <location evidence="2">Cell membrane</location>
        <topology evidence="2">Multi-pass membrane protein</topology>
    </subcellularLocation>
</comment>
<comment type="similarity">
    <text evidence="2">Belongs to the UPF0324 family.</text>
</comment>
<evidence type="ECO:0000255" key="1"/>
<evidence type="ECO:0000305" key="2"/>
<reference key="1">
    <citation type="journal article" date="2002" name="Proc. Natl. Acad. Sci. U.S.A.">
        <title>The complete genome sequence of Chlorobium tepidum TLS, a photosynthetic, anaerobic, green-sulfur bacterium.</title>
        <authorList>
            <person name="Eisen J.A."/>
            <person name="Nelson K.E."/>
            <person name="Paulsen I.T."/>
            <person name="Heidelberg J.F."/>
            <person name="Wu M."/>
            <person name="Dodson R.J."/>
            <person name="DeBoy R.T."/>
            <person name="Gwinn M.L."/>
            <person name="Nelson W.C."/>
            <person name="Haft D.H."/>
            <person name="Hickey E.K."/>
            <person name="Peterson J.D."/>
            <person name="Durkin A.S."/>
            <person name="Kolonay J.F."/>
            <person name="Yang F."/>
            <person name="Holt I.E."/>
            <person name="Umayam L.A."/>
            <person name="Mason T.M."/>
            <person name="Brenner M."/>
            <person name="Shea T.P."/>
            <person name="Parksey D.S."/>
            <person name="Nierman W.C."/>
            <person name="Feldblyum T.V."/>
            <person name="Hansen C.L."/>
            <person name="Craven M.B."/>
            <person name="Radune D."/>
            <person name="Vamathevan J.J."/>
            <person name="Khouri H.M."/>
            <person name="White O."/>
            <person name="Gruber T.M."/>
            <person name="Ketchum K.A."/>
            <person name="Venter J.C."/>
            <person name="Tettelin H."/>
            <person name="Bryant D.A."/>
            <person name="Fraser C.M."/>
        </authorList>
    </citation>
    <scope>NUCLEOTIDE SEQUENCE [LARGE SCALE GENOMIC DNA]</scope>
    <source>
        <strain>ATCC 49652 / DSM 12025 / NBRC 103806 / TLS</strain>
    </source>
</reference>
<proteinExistence type="inferred from homology"/>
<gene>
    <name type="ordered locus">CT0845</name>
</gene>
<sequence>MKHVDTEIPTEEQIHEAEKFGFHGQVQAAKIRFDRYFPGVLASITVAAAATFLSDHYGAPTMLFALLIGMAFRFLSEDESRALVGIQFASTTVLRIGVALLGMRITLGQIQSLGVKPVVMVFFSVLLTILFGLALSKMMGRGKRFGVLTGGSVGICGASAALAIAAVLPQDEYSERNTIFTVISITALSTLAMIAYPVVAQWFGLDHQAAGIFLGGTIHDVAQVVGAGYSVSEQTGDTATVIKLLRVSMLVPVVFILSLIFHKRNQKDGNAPRRTLLPPFIIFFVLFVGINSLGVVPKPATQFINDVSRWCLVTAIGALGMKTSLKSLFEVGWKPVSIMIAETVFLAVLVLGSVVWMS</sequence>
<protein>
    <recommendedName>
        <fullName>UPF0324 membrane protein CT0845</fullName>
    </recommendedName>
</protein>